<keyword id="KW-0028">Amino-acid biosynthesis</keyword>
<keyword id="KW-0032">Aminotransferase</keyword>
<keyword id="KW-0963">Cytoplasm</keyword>
<keyword id="KW-0663">Pyridoxal phosphate</keyword>
<keyword id="KW-0664">Pyridoxine biosynthesis</keyword>
<keyword id="KW-1185">Reference proteome</keyword>
<keyword id="KW-0718">Serine biosynthesis</keyword>
<keyword id="KW-0808">Transferase</keyword>
<protein>
    <recommendedName>
        <fullName evidence="1">Phosphoserine aminotransferase</fullName>
        <ecNumber evidence="1">2.6.1.52</ecNumber>
    </recommendedName>
    <alternativeName>
        <fullName evidence="1">Phosphohydroxythreonine aminotransferase</fullName>
        <shortName evidence="1">PSAT</shortName>
    </alternativeName>
</protein>
<gene>
    <name evidence="1" type="primary">serC</name>
    <name type="ordered locus">SSON_0908</name>
</gene>
<evidence type="ECO:0000255" key="1">
    <source>
        <dbReference type="HAMAP-Rule" id="MF_00160"/>
    </source>
</evidence>
<accession>Q3Z3L5</accession>
<feature type="chain" id="PRO_1000203581" description="Phosphoserine aminotransferase">
    <location>
        <begin position="1"/>
        <end position="362"/>
    </location>
</feature>
<feature type="binding site" evidence="1">
    <location>
        <position position="9"/>
    </location>
    <ligand>
        <name>L-glutamate</name>
        <dbReference type="ChEBI" id="CHEBI:29985"/>
    </ligand>
</feature>
<feature type="binding site" evidence="1">
    <location>
        <position position="42"/>
    </location>
    <ligand>
        <name>L-glutamate</name>
        <dbReference type="ChEBI" id="CHEBI:29985"/>
    </ligand>
</feature>
<feature type="binding site" evidence="1">
    <location>
        <begin position="76"/>
        <end position="77"/>
    </location>
    <ligand>
        <name>pyridoxal 5'-phosphate</name>
        <dbReference type="ChEBI" id="CHEBI:597326"/>
    </ligand>
</feature>
<feature type="binding site" evidence="1">
    <location>
        <position position="102"/>
    </location>
    <ligand>
        <name>pyridoxal 5'-phosphate</name>
        <dbReference type="ChEBI" id="CHEBI:597326"/>
    </ligand>
</feature>
<feature type="binding site" evidence="1">
    <location>
        <position position="153"/>
    </location>
    <ligand>
        <name>pyridoxal 5'-phosphate</name>
        <dbReference type="ChEBI" id="CHEBI:597326"/>
    </ligand>
</feature>
<feature type="binding site" evidence="1">
    <location>
        <position position="174"/>
    </location>
    <ligand>
        <name>pyridoxal 5'-phosphate</name>
        <dbReference type="ChEBI" id="CHEBI:597326"/>
    </ligand>
</feature>
<feature type="binding site" evidence="1">
    <location>
        <position position="197"/>
    </location>
    <ligand>
        <name>pyridoxal 5'-phosphate</name>
        <dbReference type="ChEBI" id="CHEBI:597326"/>
    </ligand>
</feature>
<feature type="binding site" evidence="1">
    <location>
        <begin position="239"/>
        <end position="240"/>
    </location>
    <ligand>
        <name>pyridoxal 5'-phosphate</name>
        <dbReference type="ChEBI" id="CHEBI:597326"/>
    </ligand>
</feature>
<feature type="modified residue" description="N6-(pyridoxal phosphate)lysine" evidence="1">
    <location>
        <position position="198"/>
    </location>
</feature>
<comment type="function">
    <text evidence="1">Catalyzes the reversible conversion of 3-phosphohydroxypyruvate to phosphoserine and of 3-hydroxy-2-oxo-4-phosphonooxybutanoate to phosphohydroxythreonine.</text>
</comment>
<comment type="catalytic activity">
    <reaction evidence="1">
        <text>O-phospho-L-serine + 2-oxoglutarate = 3-phosphooxypyruvate + L-glutamate</text>
        <dbReference type="Rhea" id="RHEA:14329"/>
        <dbReference type="ChEBI" id="CHEBI:16810"/>
        <dbReference type="ChEBI" id="CHEBI:18110"/>
        <dbReference type="ChEBI" id="CHEBI:29985"/>
        <dbReference type="ChEBI" id="CHEBI:57524"/>
        <dbReference type="EC" id="2.6.1.52"/>
    </reaction>
</comment>
<comment type="catalytic activity">
    <reaction evidence="1">
        <text>4-(phosphooxy)-L-threonine + 2-oxoglutarate = (R)-3-hydroxy-2-oxo-4-phosphooxybutanoate + L-glutamate</text>
        <dbReference type="Rhea" id="RHEA:16573"/>
        <dbReference type="ChEBI" id="CHEBI:16810"/>
        <dbReference type="ChEBI" id="CHEBI:29985"/>
        <dbReference type="ChEBI" id="CHEBI:58452"/>
        <dbReference type="ChEBI" id="CHEBI:58538"/>
        <dbReference type="EC" id="2.6.1.52"/>
    </reaction>
</comment>
<comment type="cofactor">
    <cofactor evidence="1">
        <name>pyridoxal 5'-phosphate</name>
        <dbReference type="ChEBI" id="CHEBI:597326"/>
    </cofactor>
    <text evidence="1">Binds 1 pyridoxal phosphate per subunit.</text>
</comment>
<comment type="pathway">
    <text evidence="1">Amino-acid biosynthesis; L-serine biosynthesis; L-serine from 3-phospho-D-glycerate: step 2/3.</text>
</comment>
<comment type="pathway">
    <text evidence="1">Cofactor biosynthesis; pyridoxine 5'-phosphate biosynthesis; pyridoxine 5'-phosphate from D-erythrose 4-phosphate: step 3/5.</text>
</comment>
<comment type="subunit">
    <text evidence="1">Homodimer.</text>
</comment>
<comment type="subcellular location">
    <subcellularLocation>
        <location evidence="1">Cytoplasm</location>
    </subcellularLocation>
</comment>
<comment type="similarity">
    <text evidence="1">Belongs to the class-V pyridoxal-phosphate-dependent aminotransferase family. SerC subfamily.</text>
</comment>
<proteinExistence type="inferred from homology"/>
<reference key="1">
    <citation type="journal article" date="2005" name="Nucleic Acids Res.">
        <title>Genome dynamics and diversity of Shigella species, the etiologic agents of bacillary dysentery.</title>
        <authorList>
            <person name="Yang F."/>
            <person name="Yang J."/>
            <person name="Zhang X."/>
            <person name="Chen L."/>
            <person name="Jiang Y."/>
            <person name="Yan Y."/>
            <person name="Tang X."/>
            <person name="Wang J."/>
            <person name="Xiong Z."/>
            <person name="Dong J."/>
            <person name="Xue Y."/>
            <person name="Zhu Y."/>
            <person name="Xu X."/>
            <person name="Sun L."/>
            <person name="Chen S."/>
            <person name="Nie H."/>
            <person name="Peng J."/>
            <person name="Xu J."/>
            <person name="Wang Y."/>
            <person name="Yuan Z."/>
            <person name="Wen Y."/>
            <person name="Yao Z."/>
            <person name="Shen Y."/>
            <person name="Qiang B."/>
            <person name="Hou Y."/>
            <person name="Yu J."/>
            <person name="Jin Q."/>
        </authorList>
    </citation>
    <scope>NUCLEOTIDE SEQUENCE [LARGE SCALE GENOMIC DNA]</scope>
    <source>
        <strain>Ss046</strain>
    </source>
</reference>
<organism>
    <name type="scientific">Shigella sonnei (strain Ss046)</name>
    <dbReference type="NCBI Taxonomy" id="300269"/>
    <lineage>
        <taxon>Bacteria</taxon>
        <taxon>Pseudomonadati</taxon>
        <taxon>Pseudomonadota</taxon>
        <taxon>Gammaproteobacteria</taxon>
        <taxon>Enterobacterales</taxon>
        <taxon>Enterobacteriaceae</taxon>
        <taxon>Shigella</taxon>
    </lineage>
</organism>
<sequence length="362" mass="39840">MAQIFNFSSGPAMLPAEVLKQAQQELRDWNGLGTSVMEVSHRGKEFIQVAEEAEKDFRDLLNVPSNYKVLFCHGGGRGQFAAVPLNILGDKTTADYVDAGYWAASAIKEAKKYCTPNVFDAKVTVDGLRAVKPMREWQLSDNAAYMHYCPNETIDGIAIDETPDFGKDVVVAADFSSTILSRPIDVSRYGVIYAGAQKNIGPAGLTIVIVREDLLGKANIACPSILDYSILNDNGSMFNTPPTFAWYLSGLVFKWLKANGGVAEMDKINQQKAELLYGVIDNSDFYRNDVAKANRSRMNVPFQLADSALDKLFLEESFAAGLHALKGHRVVGGMRASIYNAMPLEGVKALTDFMVEFERRHG</sequence>
<dbReference type="EC" id="2.6.1.52" evidence="1"/>
<dbReference type="EMBL" id="CP000038">
    <property type="protein sequence ID" value="AAZ87647.1"/>
    <property type="molecule type" value="Genomic_DNA"/>
</dbReference>
<dbReference type="RefSeq" id="WP_000057149.1">
    <property type="nucleotide sequence ID" value="NC_007384.1"/>
</dbReference>
<dbReference type="SMR" id="Q3Z3L5"/>
<dbReference type="GeneID" id="93776511"/>
<dbReference type="KEGG" id="ssn:SSON_0908"/>
<dbReference type="HOGENOM" id="CLU_034866_0_2_6"/>
<dbReference type="UniPathway" id="UPA00135">
    <property type="reaction ID" value="UER00197"/>
</dbReference>
<dbReference type="UniPathway" id="UPA00244">
    <property type="reaction ID" value="UER00311"/>
</dbReference>
<dbReference type="Proteomes" id="UP000002529">
    <property type="component" value="Chromosome"/>
</dbReference>
<dbReference type="GO" id="GO:0005737">
    <property type="term" value="C:cytoplasm"/>
    <property type="evidence" value="ECO:0007669"/>
    <property type="project" value="UniProtKB-SubCell"/>
</dbReference>
<dbReference type="GO" id="GO:0004648">
    <property type="term" value="F:O-phospho-L-serine:2-oxoglutarate aminotransferase activity"/>
    <property type="evidence" value="ECO:0007669"/>
    <property type="project" value="UniProtKB-UniRule"/>
</dbReference>
<dbReference type="GO" id="GO:0030170">
    <property type="term" value="F:pyridoxal phosphate binding"/>
    <property type="evidence" value="ECO:0007669"/>
    <property type="project" value="UniProtKB-UniRule"/>
</dbReference>
<dbReference type="GO" id="GO:0006564">
    <property type="term" value="P:L-serine biosynthetic process"/>
    <property type="evidence" value="ECO:0007669"/>
    <property type="project" value="UniProtKB-UniRule"/>
</dbReference>
<dbReference type="GO" id="GO:0008615">
    <property type="term" value="P:pyridoxine biosynthetic process"/>
    <property type="evidence" value="ECO:0007669"/>
    <property type="project" value="UniProtKB-UniRule"/>
</dbReference>
<dbReference type="CDD" id="cd00611">
    <property type="entry name" value="PSAT_like"/>
    <property type="match status" value="1"/>
</dbReference>
<dbReference type="FunFam" id="3.40.640.10:FF:000010">
    <property type="entry name" value="Phosphoserine aminotransferase"/>
    <property type="match status" value="1"/>
</dbReference>
<dbReference type="FunFam" id="3.90.1150.10:FF:000006">
    <property type="entry name" value="Phosphoserine aminotransferase"/>
    <property type="match status" value="1"/>
</dbReference>
<dbReference type="Gene3D" id="3.90.1150.10">
    <property type="entry name" value="Aspartate Aminotransferase, domain 1"/>
    <property type="match status" value="1"/>
</dbReference>
<dbReference type="Gene3D" id="3.40.640.10">
    <property type="entry name" value="Type I PLP-dependent aspartate aminotransferase-like (Major domain)"/>
    <property type="match status" value="1"/>
</dbReference>
<dbReference type="HAMAP" id="MF_00160">
    <property type="entry name" value="SerC_aminotrans_5"/>
    <property type="match status" value="1"/>
</dbReference>
<dbReference type="InterPro" id="IPR000192">
    <property type="entry name" value="Aminotrans_V_dom"/>
</dbReference>
<dbReference type="InterPro" id="IPR020578">
    <property type="entry name" value="Aminotrans_V_PyrdxlP_BS"/>
</dbReference>
<dbReference type="InterPro" id="IPR022278">
    <property type="entry name" value="Pser_aminoTfrase"/>
</dbReference>
<dbReference type="InterPro" id="IPR015424">
    <property type="entry name" value="PyrdxlP-dep_Trfase"/>
</dbReference>
<dbReference type="InterPro" id="IPR015421">
    <property type="entry name" value="PyrdxlP-dep_Trfase_major"/>
</dbReference>
<dbReference type="InterPro" id="IPR015422">
    <property type="entry name" value="PyrdxlP-dep_Trfase_small"/>
</dbReference>
<dbReference type="NCBIfam" id="NF003764">
    <property type="entry name" value="PRK05355.1"/>
    <property type="match status" value="1"/>
</dbReference>
<dbReference type="NCBIfam" id="TIGR01364">
    <property type="entry name" value="serC_1"/>
    <property type="match status" value="1"/>
</dbReference>
<dbReference type="PANTHER" id="PTHR43247">
    <property type="entry name" value="PHOSPHOSERINE AMINOTRANSFERASE"/>
    <property type="match status" value="1"/>
</dbReference>
<dbReference type="PANTHER" id="PTHR43247:SF1">
    <property type="entry name" value="PHOSPHOSERINE AMINOTRANSFERASE"/>
    <property type="match status" value="1"/>
</dbReference>
<dbReference type="Pfam" id="PF00266">
    <property type="entry name" value="Aminotran_5"/>
    <property type="match status" value="1"/>
</dbReference>
<dbReference type="PIRSF" id="PIRSF000525">
    <property type="entry name" value="SerC"/>
    <property type="match status" value="1"/>
</dbReference>
<dbReference type="SUPFAM" id="SSF53383">
    <property type="entry name" value="PLP-dependent transferases"/>
    <property type="match status" value="1"/>
</dbReference>
<dbReference type="PROSITE" id="PS00595">
    <property type="entry name" value="AA_TRANSFER_CLASS_5"/>
    <property type="match status" value="1"/>
</dbReference>
<name>SERC_SHISS</name>